<accession>P0A1J2</accession>
<accession>P16322</accession>
<name>FLGE_SALTI</name>
<proteinExistence type="inferred from homology"/>
<evidence type="ECO:0000250" key="1"/>
<evidence type="ECO:0000305" key="2"/>
<gene>
    <name type="primary">flgE</name>
    <name type="synonym">fla FV</name>
    <name type="synonym">flaK</name>
    <name type="ordered locus">STY1216</name>
    <name type="ordered locus">t1743</name>
</gene>
<comment type="subcellular location">
    <subcellularLocation>
        <location evidence="1">Bacterial flagellum basal body</location>
    </subcellularLocation>
</comment>
<comment type="similarity">
    <text evidence="2">Belongs to the flagella basal body rod proteins family.</text>
</comment>
<dbReference type="EMBL" id="AL513382">
    <property type="protein sequence ID" value="CAD08301.1"/>
    <property type="molecule type" value="Genomic_DNA"/>
</dbReference>
<dbReference type="EMBL" id="AE014613">
    <property type="protein sequence ID" value="AAO69367.1"/>
    <property type="molecule type" value="Genomic_DNA"/>
</dbReference>
<dbReference type="RefSeq" id="NP_455670.1">
    <property type="nucleotide sequence ID" value="NC_003198.1"/>
</dbReference>
<dbReference type="RefSeq" id="WP_000010567.1">
    <property type="nucleotide sequence ID" value="NZ_WSUR01000018.1"/>
</dbReference>
<dbReference type="SMR" id="P0A1J2"/>
<dbReference type="STRING" id="220341.gene:17585181"/>
<dbReference type="KEGG" id="stt:t1743"/>
<dbReference type="KEGG" id="sty:STY1216"/>
<dbReference type="PATRIC" id="fig|220341.7.peg.1217"/>
<dbReference type="eggNOG" id="COG1749">
    <property type="taxonomic scope" value="Bacteria"/>
</dbReference>
<dbReference type="HOGENOM" id="CLU_013687_2_0_6"/>
<dbReference type="OMA" id="QTRMDVV"/>
<dbReference type="Proteomes" id="UP000000541">
    <property type="component" value="Chromosome"/>
</dbReference>
<dbReference type="Proteomes" id="UP000002670">
    <property type="component" value="Chromosome"/>
</dbReference>
<dbReference type="GO" id="GO:0009425">
    <property type="term" value="C:bacterial-type flagellum basal body"/>
    <property type="evidence" value="ECO:0007669"/>
    <property type="project" value="UniProtKB-SubCell"/>
</dbReference>
<dbReference type="GO" id="GO:0009424">
    <property type="term" value="C:bacterial-type flagellum hook"/>
    <property type="evidence" value="ECO:0007669"/>
    <property type="project" value="TreeGrafter"/>
</dbReference>
<dbReference type="GO" id="GO:0005829">
    <property type="term" value="C:cytosol"/>
    <property type="evidence" value="ECO:0007669"/>
    <property type="project" value="TreeGrafter"/>
</dbReference>
<dbReference type="GO" id="GO:0071978">
    <property type="term" value="P:bacterial-type flagellum-dependent swarming motility"/>
    <property type="evidence" value="ECO:0007669"/>
    <property type="project" value="TreeGrafter"/>
</dbReference>
<dbReference type="FunFam" id="2.60.98.20:FF:000001">
    <property type="entry name" value="Flagellar hook protein FlgE"/>
    <property type="match status" value="1"/>
</dbReference>
<dbReference type="Gene3D" id="2.60.98.20">
    <property type="entry name" value="Flagellar hook protein FlgE"/>
    <property type="match status" value="1"/>
</dbReference>
<dbReference type="InterPro" id="IPR037058">
    <property type="entry name" value="Falgellar_hook_FlgE_sf"/>
</dbReference>
<dbReference type="InterPro" id="IPR001444">
    <property type="entry name" value="Flag_bb_rod_N"/>
</dbReference>
<dbReference type="InterPro" id="IPR019776">
    <property type="entry name" value="Flagellar_basal_body_rod_CS"/>
</dbReference>
<dbReference type="InterPro" id="IPR020013">
    <property type="entry name" value="Flagellar_FlgE/F/G"/>
</dbReference>
<dbReference type="InterPro" id="IPR010930">
    <property type="entry name" value="Flg_bb/hook_C_dom"/>
</dbReference>
<dbReference type="InterPro" id="IPR037925">
    <property type="entry name" value="FlgE/F/G-like"/>
</dbReference>
<dbReference type="InterPro" id="IPR011491">
    <property type="entry name" value="FlgE_D2"/>
</dbReference>
<dbReference type="InterPro" id="IPR053967">
    <property type="entry name" value="LlgE_F_G-like_D1"/>
</dbReference>
<dbReference type="NCBIfam" id="TIGR03506">
    <property type="entry name" value="FlgEFG_subfam"/>
    <property type="match status" value="1"/>
</dbReference>
<dbReference type="NCBIfam" id="NF004238">
    <property type="entry name" value="PRK05682.1-1"/>
    <property type="match status" value="1"/>
</dbReference>
<dbReference type="PANTHER" id="PTHR30435:SF1">
    <property type="entry name" value="FLAGELLAR HOOK PROTEIN FLGE"/>
    <property type="match status" value="1"/>
</dbReference>
<dbReference type="PANTHER" id="PTHR30435">
    <property type="entry name" value="FLAGELLAR PROTEIN"/>
    <property type="match status" value="1"/>
</dbReference>
<dbReference type="Pfam" id="PF00460">
    <property type="entry name" value="Flg_bb_rod"/>
    <property type="match status" value="1"/>
</dbReference>
<dbReference type="Pfam" id="PF06429">
    <property type="entry name" value="Flg_bbr_C"/>
    <property type="match status" value="1"/>
</dbReference>
<dbReference type="Pfam" id="PF07559">
    <property type="entry name" value="FlgE_D2"/>
    <property type="match status" value="1"/>
</dbReference>
<dbReference type="Pfam" id="PF22692">
    <property type="entry name" value="LlgE_F_G_D1"/>
    <property type="match status" value="1"/>
</dbReference>
<dbReference type="SUPFAM" id="SSF117143">
    <property type="entry name" value="Flagellar hook protein flgE"/>
    <property type="match status" value="1"/>
</dbReference>
<dbReference type="PROSITE" id="PS00588">
    <property type="entry name" value="FLAGELLA_BB_ROD"/>
    <property type="match status" value="1"/>
</dbReference>
<organism>
    <name type="scientific">Salmonella typhi</name>
    <dbReference type="NCBI Taxonomy" id="90370"/>
    <lineage>
        <taxon>Bacteria</taxon>
        <taxon>Pseudomonadati</taxon>
        <taxon>Pseudomonadota</taxon>
        <taxon>Gammaproteobacteria</taxon>
        <taxon>Enterobacterales</taxon>
        <taxon>Enterobacteriaceae</taxon>
        <taxon>Salmonella</taxon>
    </lineage>
</organism>
<reference key="1">
    <citation type="journal article" date="2001" name="Nature">
        <title>Complete genome sequence of a multiple drug resistant Salmonella enterica serovar Typhi CT18.</title>
        <authorList>
            <person name="Parkhill J."/>
            <person name="Dougan G."/>
            <person name="James K.D."/>
            <person name="Thomson N.R."/>
            <person name="Pickard D."/>
            <person name="Wain J."/>
            <person name="Churcher C.M."/>
            <person name="Mungall K.L."/>
            <person name="Bentley S.D."/>
            <person name="Holden M.T.G."/>
            <person name="Sebaihia M."/>
            <person name="Baker S."/>
            <person name="Basham D."/>
            <person name="Brooks K."/>
            <person name="Chillingworth T."/>
            <person name="Connerton P."/>
            <person name="Cronin A."/>
            <person name="Davis P."/>
            <person name="Davies R.M."/>
            <person name="Dowd L."/>
            <person name="White N."/>
            <person name="Farrar J."/>
            <person name="Feltwell T."/>
            <person name="Hamlin N."/>
            <person name="Haque A."/>
            <person name="Hien T.T."/>
            <person name="Holroyd S."/>
            <person name="Jagels K."/>
            <person name="Krogh A."/>
            <person name="Larsen T.S."/>
            <person name="Leather S."/>
            <person name="Moule S."/>
            <person name="O'Gaora P."/>
            <person name="Parry C."/>
            <person name="Quail M.A."/>
            <person name="Rutherford K.M."/>
            <person name="Simmonds M."/>
            <person name="Skelton J."/>
            <person name="Stevens K."/>
            <person name="Whitehead S."/>
            <person name="Barrell B.G."/>
        </authorList>
    </citation>
    <scope>NUCLEOTIDE SEQUENCE [LARGE SCALE GENOMIC DNA]</scope>
    <source>
        <strain>CT18</strain>
    </source>
</reference>
<reference key="2">
    <citation type="journal article" date="2003" name="J. Bacteriol.">
        <title>Comparative genomics of Salmonella enterica serovar Typhi strains Ty2 and CT18.</title>
        <authorList>
            <person name="Deng W."/>
            <person name="Liou S.-R."/>
            <person name="Plunkett G. III"/>
            <person name="Mayhew G.F."/>
            <person name="Rose D.J."/>
            <person name="Burland V."/>
            <person name="Kodoyianni V."/>
            <person name="Schwartz D.C."/>
            <person name="Blattner F.R."/>
        </authorList>
    </citation>
    <scope>NUCLEOTIDE SEQUENCE [LARGE SCALE GENOMIC DNA]</scope>
    <source>
        <strain>ATCC 700931 / Ty2</strain>
    </source>
</reference>
<keyword id="KW-0975">Bacterial flagellum</keyword>
<feature type="initiator methionine" description="Removed" evidence="1">
    <location>
        <position position="1"/>
    </location>
</feature>
<feature type="chain" id="PRO_0000180826" description="Flagellar hook protein FlgE">
    <location>
        <begin position="2"/>
        <end position="403"/>
    </location>
</feature>
<protein>
    <recommendedName>
        <fullName>Flagellar hook protein FlgE</fullName>
    </recommendedName>
</protein>
<sequence>MSFSQAVSGLNAAATNLDVIGNNIANSATYGFKSGTASFADMFAGSKVGLGVKVAGITQDFTDGTTTNTGRGLDVAISQNGFFRLVDSNGSVFYSRNGQFKLDENRNLVNMQGMQLTGYPATGTPPTIQQGANPAPITIPNTLMAAKSTTTASMQINLNSTDPVPSKTPFSVSDADSYNKKGTVTVYDSQGNAHDMNVYFVKTKDNEWAVYTHDSSDPAATAPTTASTTLKFNENGILESGGTVNITTGTINGATAATFSLSFLNSMQQNTGANNIVATNQNGYKPGDLVSYQINNDGTVVGNYSNEQEQVLGQIVLANFANNEGLASQGDNVWAATQASGVALLGTAGSGNFGKLTNGALEASNVDLSKELVNMIVAQRNYQSNAQTIKTQDQILNTLVNLR</sequence>